<protein>
    <recommendedName>
        <fullName evidence="8">Sterol 3-beta-glucosyltransferase</fullName>
        <ecNumber evidence="1">2.4.1.-</ecNumber>
        <ecNumber evidence="1">2.4.1.173</ecNumber>
    </recommendedName>
    <alternativeName>
        <fullName evidence="7">Autophagy-related protein 26</fullName>
    </alternativeName>
</protein>
<reference key="1">
    <citation type="journal article" date="2009" name="Plant Cell">
        <title>Atg26-mediated pexophagy is required for host invasion by the plant pathogenic fungus Colletotrichum orbiculare.</title>
        <authorList>
            <person name="Asakura M."/>
            <person name="Ninomiya S."/>
            <person name="Sugimoto M."/>
            <person name="Oku M."/>
            <person name="Yamashita S."/>
            <person name="Okuno T."/>
            <person name="Sakai Y."/>
            <person name="Takano Y."/>
        </authorList>
    </citation>
    <scope>NUCLEOTIDE SEQUENCE [GENOMIC DNA]</scope>
    <scope>FUNCTION</scope>
    <scope>DISRUPTION PHENOTYPE</scope>
</reference>
<dbReference type="EC" id="2.4.1.-" evidence="1"/>
<dbReference type="EC" id="2.4.1.173" evidence="1"/>
<dbReference type="EMBL" id="AB365481">
    <property type="protein sequence ID" value="BAH60889.1"/>
    <property type="molecule type" value="Genomic_DNA"/>
</dbReference>
<dbReference type="SMR" id="C4B4E5"/>
<dbReference type="CAZy" id="GT1">
    <property type="family name" value="Glycosyltransferase Family 1"/>
</dbReference>
<dbReference type="GO" id="GO:0034045">
    <property type="term" value="C:phagophore assembly site membrane"/>
    <property type="evidence" value="ECO:0007669"/>
    <property type="project" value="UniProtKB-SubCell"/>
</dbReference>
<dbReference type="GO" id="GO:0016906">
    <property type="term" value="F:sterol 3-beta-glucosyltransferase activity"/>
    <property type="evidence" value="ECO:0007669"/>
    <property type="project" value="UniProtKB-EC"/>
</dbReference>
<dbReference type="GO" id="GO:0006914">
    <property type="term" value="P:autophagy"/>
    <property type="evidence" value="ECO:0007669"/>
    <property type="project" value="UniProtKB-KW"/>
</dbReference>
<dbReference type="GO" id="GO:0005975">
    <property type="term" value="P:carbohydrate metabolic process"/>
    <property type="evidence" value="ECO:0007669"/>
    <property type="project" value="InterPro"/>
</dbReference>
<dbReference type="GO" id="GO:0030259">
    <property type="term" value="P:lipid glycosylation"/>
    <property type="evidence" value="ECO:0007669"/>
    <property type="project" value="InterPro"/>
</dbReference>
<dbReference type="GO" id="GO:0015031">
    <property type="term" value="P:protein transport"/>
    <property type="evidence" value="ECO:0007669"/>
    <property type="project" value="UniProtKB-KW"/>
</dbReference>
<dbReference type="GO" id="GO:0016125">
    <property type="term" value="P:sterol metabolic process"/>
    <property type="evidence" value="ECO:0007669"/>
    <property type="project" value="TreeGrafter"/>
</dbReference>
<dbReference type="CDD" id="cd03784">
    <property type="entry name" value="GT1_Gtf-like"/>
    <property type="match status" value="1"/>
</dbReference>
<dbReference type="CDD" id="cd13215">
    <property type="entry name" value="PH-GRAM1_AGT26"/>
    <property type="match status" value="1"/>
</dbReference>
<dbReference type="CDD" id="cd13216">
    <property type="entry name" value="PH-GRAM2_AGT26"/>
    <property type="match status" value="1"/>
</dbReference>
<dbReference type="FunFam" id="2.30.29.30:FF:000303">
    <property type="entry name" value="Sterol 3-beta-glucosyltransferase"/>
    <property type="match status" value="1"/>
</dbReference>
<dbReference type="FunFam" id="2.30.29.30:FF:000560">
    <property type="entry name" value="Sterol 3-beta-glucosyltransferase"/>
    <property type="match status" value="1"/>
</dbReference>
<dbReference type="FunFam" id="3.40.50.2000:FF:000029">
    <property type="entry name" value="Sterol 3-beta-glucosyltransferase"/>
    <property type="match status" value="1"/>
</dbReference>
<dbReference type="FunFam" id="3.40.50.2000:FF:000009">
    <property type="entry name" value="Sterol 3-beta-glucosyltransferase UGT80A2"/>
    <property type="match status" value="1"/>
</dbReference>
<dbReference type="Gene3D" id="3.40.50.2000">
    <property type="entry name" value="Glycogen Phosphorylase B"/>
    <property type="match status" value="2"/>
</dbReference>
<dbReference type="Gene3D" id="2.30.29.30">
    <property type="entry name" value="Pleckstrin-homology domain (PH domain)/Phosphotyrosine-binding domain (PTB)"/>
    <property type="match status" value="3"/>
</dbReference>
<dbReference type="InterPro" id="IPR048066">
    <property type="entry name" value="ATG26_PH_GRAM1"/>
</dbReference>
<dbReference type="InterPro" id="IPR048065">
    <property type="entry name" value="ATG26_PH_GRAM2"/>
</dbReference>
<dbReference type="InterPro" id="IPR010610">
    <property type="entry name" value="EryCIII-like_C"/>
</dbReference>
<dbReference type="InterPro" id="IPR050426">
    <property type="entry name" value="Glycosyltransferase_28"/>
</dbReference>
<dbReference type="InterPro" id="IPR004276">
    <property type="entry name" value="GlycoTrans_28_N"/>
</dbReference>
<dbReference type="InterPro" id="IPR004182">
    <property type="entry name" value="GRAM"/>
</dbReference>
<dbReference type="InterPro" id="IPR011993">
    <property type="entry name" value="PH-like_dom_sf"/>
</dbReference>
<dbReference type="InterPro" id="IPR001849">
    <property type="entry name" value="PH_domain"/>
</dbReference>
<dbReference type="InterPro" id="IPR002213">
    <property type="entry name" value="UDP_glucos_trans"/>
</dbReference>
<dbReference type="PANTHER" id="PTHR48050">
    <property type="entry name" value="STEROL 3-BETA-GLUCOSYLTRANSFERASE"/>
    <property type="match status" value="1"/>
</dbReference>
<dbReference type="PANTHER" id="PTHR48050:SF25">
    <property type="entry name" value="STEROL 3-BETA-GLUCOSYLTRANSFERASE"/>
    <property type="match status" value="1"/>
</dbReference>
<dbReference type="Pfam" id="PF06722">
    <property type="entry name" value="EryCIII-like_C"/>
    <property type="match status" value="1"/>
</dbReference>
<dbReference type="Pfam" id="PF03033">
    <property type="entry name" value="Glyco_transf_28"/>
    <property type="match status" value="1"/>
</dbReference>
<dbReference type="Pfam" id="PF02893">
    <property type="entry name" value="GRAM"/>
    <property type="match status" value="2"/>
</dbReference>
<dbReference type="Pfam" id="PF00169">
    <property type="entry name" value="PH"/>
    <property type="match status" value="1"/>
</dbReference>
<dbReference type="SMART" id="SM00568">
    <property type="entry name" value="GRAM"/>
    <property type="match status" value="2"/>
</dbReference>
<dbReference type="SMART" id="SM00233">
    <property type="entry name" value="PH"/>
    <property type="match status" value="1"/>
</dbReference>
<dbReference type="SUPFAM" id="SSF50729">
    <property type="entry name" value="PH domain-like"/>
    <property type="match status" value="1"/>
</dbReference>
<dbReference type="SUPFAM" id="SSF53756">
    <property type="entry name" value="UDP-Glycosyltransferase/glycogen phosphorylase"/>
    <property type="match status" value="1"/>
</dbReference>
<dbReference type="PROSITE" id="PS50003">
    <property type="entry name" value="PH_DOMAIN"/>
    <property type="match status" value="1"/>
</dbReference>
<organism>
    <name type="scientific">Glomerella lagenarium</name>
    <name type="common">Anthracnose fungus</name>
    <name type="synonym">Colletotrichum lagenarium</name>
    <dbReference type="NCBI Taxonomy" id="5462"/>
    <lineage>
        <taxon>Eukaryota</taxon>
        <taxon>Fungi</taxon>
        <taxon>Dikarya</taxon>
        <taxon>Ascomycota</taxon>
        <taxon>Pezizomycotina</taxon>
        <taxon>Sordariomycetes</taxon>
        <taxon>Hypocreomycetidae</taxon>
        <taxon>Glomerellales</taxon>
        <taxon>Glomerellaceae</taxon>
        <taxon>Colletotrichum</taxon>
    </lineage>
</organism>
<keyword id="KW-0072">Autophagy</keyword>
<keyword id="KW-0963">Cytoplasm</keyword>
<keyword id="KW-0328">Glycosyltransferase</keyword>
<keyword id="KW-0472">Membrane</keyword>
<keyword id="KW-0653">Protein transport</keyword>
<keyword id="KW-0808">Transferase</keyword>
<keyword id="KW-0813">Transport</keyword>
<evidence type="ECO:0000250" key="1">
    <source>
        <dbReference type="UniProtKB" id="Q06321"/>
    </source>
</evidence>
<evidence type="ECO:0000250" key="2">
    <source>
        <dbReference type="UniProtKB" id="Q2U0C3"/>
    </source>
</evidence>
<evidence type="ECO:0000255" key="3"/>
<evidence type="ECO:0000255" key="4">
    <source>
        <dbReference type="PROSITE-ProRule" id="PRU00145"/>
    </source>
</evidence>
<evidence type="ECO:0000256" key="5">
    <source>
        <dbReference type="SAM" id="MobiDB-lite"/>
    </source>
</evidence>
<evidence type="ECO:0000269" key="6">
    <source>
    </source>
</evidence>
<evidence type="ECO:0000303" key="7">
    <source>
    </source>
</evidence>
<evidence type="ECO:0000305" key="8"/>
<accession>C4B4E5</accession>
<sequence length="1475" mass="165689">MPPPPLSLPLHGPAGAASVTFAGDEDVKKRVGKKLQKKRHEPTTPAVELPERLKEGDDAGEEDLVPTQGPPMFMNMNQSIFGLIAAAGSRVDFHDRFESSDDESADEGPQRDSADRSHSSSTHGLFLHRKQRRRDESDVAKTTVLNKDPYGSGKPEKHKRKISGHKLLRSLPALPRLPRHKSKKESSKLEPPSEEASDGSGFAQSQPVDEAEDDEDDKDHRLAPVMSRMLEAKAEMSARPSFDVERFSSDQLTYSESADSNDTALARRLQDIFEFDQPEAVIEEYPCWLLQSVLLQGYMYITAKHICFYSYLPKKALEVVKSGYLSKSGKRNPKYNRYWFRLKGDVLSYFKDPSNVYFPSGQIDLRYGISASVTDKKDGLNFTVVTHHRTYHFRADSAPSAKEWVKSLQRVIFRSHNEGDSVKISLPIENVIDIEDTQMLNFADTCKIRVIDNDETYAIDEYFFSFFSFGKEAISVLKILIEDASSTAKDAARLKAVQEEEDRQQQQQQQHPMQPPMQASARSSMSGSRRAIAPPKLTTNKLPEAVKATLSPMSAHSPSALSPRASMDAARASFDAFRSFRRRSLDLSTIIRDSSPRRSFSGNRRSMSRNRLDDQRRGPHQQGSTDSYVQSSMEEPSFSGMVASSIEDPSASQILRGSDVFQNPTMRRSGSASRTEVEKQQRRDPRSPPTLATYSGQHAATAGSLNDGDKQPVTPTLQSITKMGAFPLQRVGAFAEYLNNTSSKLGSMLATESMGYVEKVSGMWRGGRKHYDAPPEIKTDDEDLYEDAEGKIQTSMDRFRAHFALPETEKLQATYFGHILRVLPLYGKIYISDKSFCFRSLLPGTRTKLILPLKDIENVDKEKGFRFGYSGLVVVIRGHEEIFFEFGQAEVRDDCAVTLLQSLETTRYLEKIGDLDTEEREDEENAMAERDALKEARQTEEFHDHDVHLPKETSGVSDAPTILFDDPKASFLNFKPPQPLKITCLTIGSRGDVQPYIALCKGLLAEGHKPRIATHGEFKDWIEGHGIEFAKVEGDPGELMRLCIENGTFTWAFLREANSMFRGWLDELLVSAWEACKGSDLLIESPSAMAGIHIAEKLSIPYFRAFTMPWTRTRAYPHAFIMPEYKMGGAYNYMTYVMFDNVFWKATAHQVNRWRNNTLKLPNTSLEKMQPNKVPFLYNFSEYVVAPPLDFSDWIRVTGYWFLDEGSDWVPPQELTDFIAKARADEKKLVYVGFGSIIVNDTAKMTQEVIDAVLKADVRCILSKGWSDRMGKQGEEAVDQPVMPPEIHVIKSAPHDWLFSQIDAAAHHGGSGTTGASLRAGIPTIIRPFFGDQFFFGSRVEDIGVGICLKKWGAISFARALWEATHNDRMIVKARVLGEQIRSENGVDSAIQCIYRDMEYAKSLIKRKAGKNIQVEPDEDEESAEESWTFIGNDEPDPDMTTKKLSEMPTLPGSSDTKPLGTRIMRVSPSQQSVA</sequence>
<feature type="chain" id="PRO_0000443925" description="Sterol 3-beta-glucosyltransferase">
    <location>
        <begin position="1"/>
        <end position="1475"/>
    </location>
</feature>
<feature type="domain" description="GRAM 1" evidence="3">
    <location>
        <begin position="270"/>
        <end position="315"/>
    </location>
</feature>
<feature type="domain" description="PH" evidence="4">
    <location>
        <begin position="318"/>
        <end position="413"/>
    </location>
</feature>
<feature type="domain" description="GRAM 2" evidence="3">
    <location>
        <begin position="798"/>
        <end position="901"/>
    </location>
</feature>
<feature type="region of interest" description="Disordered" evidence="5">
    <location>
        <begin position="1"/>
        <end position="73"/>
    </location>
</feature>
<feature type="region of interest" description="Disordered" evidence="5">
    <location>
        <begin position="94"/>
        <end position="218"/>
    </location>
</feature>
<feature type="region of interest" description="Disordered" evidence="5">
    <location>
        <begin position="492"/>
        <end position="541"/>
    </location>
</feature>
<feature type="region of interest" description="Disordered" evidence="5">
    <location>
        <begin position="594"/>
        <end position="636"/>
    </location>
</feature>
<feature type="region of interest" description="Disordered" evidence="5">
    <location>
        <begin position="653"/>
        <end position="715"/>
    </location>
</feature>
<feature type="region of interest" description="Disordered" evidence="5">
    <location>
        <begin position="1413"/>
        <end position="1475"/>
    </location>
</feature>
<feature type="compositionally biased region" description="Low complexity" evidence="5">
    <location>
        <begin position="8"/>
        <end position="17"/>
    </location>
</feature>
<feature type="compositionally biased region" description="Basic residues" evidence="5">
    <location>
        <begin position="30"/>
        <end position="40"/>
    </location>
</feature>
<feature type="compositionally biased region" description="Basic and acidic residues" evidence="5">
    <location>
        <begin position="108"/>
        <end position="118"/>
    </location>
</feature>
<feature type="compositionally biased region" description="Basic residues" evidence="5">
    <location>
        <begin position="156"/>
        <end position="168"/>
    </location>
</feature>
<feature type="compositionally biased region" description="Low complexity" evidence="5">
    <location>
        <begin position="505"/>
        <end position="531"/>
    </location>
</feature>
<feature type="compositionally biased region" description="Polar residues" evidence="5">
    <location>
        <begin position="621"/>
        <end position="634"/>
    </location>
</feature>
<feature type="compositionally biased region" description="Polar residues" evidence="5">
    <location>
        <begin position="653"/>
        <end position="674"/>
    </location>
</feature>
<feature type="compositionally biased region" description="Basic and acidic residues" evidence="5">
    <location>
        <begin position="675"/>
        <end position="686"/>
    </location>
</feature>
<feature type="compositionally biased region" description="Acidic residues" evidence="5">
    <location>
        <begin position="1416"/>
        <end position="1425"/>
    </location>
</feature>
<feature type="binding site" evidence="1">
    <location>
        <position position="989"/>
    </location>
    <ligand>
        <name>UDP-alpha-D-glucose</name>
        <dbReference type="ChEBI" id="CHEBI:58885"/>
    </ligand>
</feature>
<feature type="binding site" evidence="1">
    <location>
        <position position="990"/>
    </location>
    <ligand>
        <name>UDP-alpha-D-glucose</name>
        <dbReference type="ChEBI" id="CHEBI:58885"/>
    </ligand>
</feature>
<feature type="binding site" evidence="1">
    <location>
        <position position="992"/>
    </location>
    <ligand>
        <name>UDP-alpha-D-glucose</name>
        <dbReference type="ChEBI" id="CHEBI:58885"/>
    </ligand>
</feature>
<feature type="binding site" evidence="1">
    <location>
        <position position="1293"/>
    </location>
    <ligand>
        <name>UDP-alpha-D-glucose</name>
        <dbReference type="ChEBI" id="CHEBI:58885"/>
    </ligand>
</feature>
<feature type="binding site" evidence="1">
    <location>
        <position position="1295"/>
    </location>
    <ligand>
        <name>UDP-alpha-D-glucose</name>
        <dbReference type="ChEBI" id="CHEBI:58885"/>
    </ligand>
</feature>
<feature type="binding site" evidence="1">
    <location>
        <position position="1308"/>
    </location>
    <ligand>
        <name>UDP-alpha-D-glucose</name>
        <dbReference type="ChEBI" id="CHEBI:58885"/>
    </ligand>
</feature>
<feature type="binding site" evidence="1">
    <location>
        <position position="1311"/>
    </location>
    <ligand>
        <name>UDP-alpha-D-glucose</name>
        <dbReference type="ChEBI" id="CHEBI:58885"/>
    </ligand>
</feature>
<feature type="binding site" evidence="1">
    <location>
        <position position="1312"/>
    </location>
    <ligand>
        <name>UDP-alpha-D-glucose</name>
        <dbReference type="ChEBI" id="CHEBI:58885"/>
    </ligand>
</feature>
<feature type="binding site" evidence="1">
    <location>
        <position position="1313"/>
    </location>
    <ligand>
        <name>UDP-alpha-D-glucose</name>
        <dbReference type="ChEBI" id="CHEBI:58885"/>
    </ligand>
</feature>
<feature type="binding site" evidence="1">
    <location>
        <position position="1332"/>
    </location>
    <ligand>
        <name>UDP-alpha-D-glucose</name>
        <dbReference type="ChEBI" id="CHEBI:58885"/>
    </ligand>
</feature>
<feature type="binding site" evidence="1">
    <location>
        <position position="1333"/>
    </location>
    <ligand>
        <name>UDP-alpha-D-glucose</name>
        <dbReference type="ChEBI" id="CHEBI:58885"/>
    </ligand>
</feature>
<gene>
    <name evidence="7" type="primary">ATG26</name>
</gene>
<name>ATG26_GLOLA</name>
<proteinExistence type="inferred from homology"/>
<comment type="function">
    <text evidence="1 6">Sterol glycosyltransferase responsible for the glycosylation of ergosterol to form ergosterol-glucoside (By similarity). Mediates autophagic degradation of peroxisomes (pexophagy) and is involved in pathogenesis via peroxisome degradation inside appressoria that are developing into the host invasion stage (PubMed:19363139).</text>
</comment>
<comment type="catalytic activity">
    <reaction evidence="1">
        <text>a sterol + UDP-alpha-D-glucose = a sterol 3-beta-D-glucoside + UDP + H(+)</text>
        <dbReference type="Rhea" id="RHEA:22724"/>
        <dbReference type="ChEBI" id="CHEBI:15378"/>
        <dbReference type="ChEBI" id="CHEBI:15889"/>
        <dbReference type="ChEBI" id="CHEBI:37424"/>
        <dbReference type="ChEBI" id="CHEBI:58223"/>
        <dbReference type="ChEBI" id="CHEBI:58885"/>
        <dbReference type="EC" id="2.4.1.173"/>
    </reaction>
    <physiologicalReaction direction="left-to-right" evidence="1">
        <dbReference type="Rhea" id="RHEA:22725"/>
    </physiologicalReaction>
</comment>
<comment type="catalytic activity">
    <reaction evidence="1">
        <text>ergosterol + UDP-alpha-D-glucose = ergosteryl 3-beta-D-glucoside + UDP + H(+)</text>
        <dbReference type="Rhea" id="RHEA:61836"/>
        <dbReference type="ChEBI" id="CHEBI:15378"/>
        <dbReference type="ChEBI" id="CHEBI:16933"/>
        <dbReference type="ChEBI" id="CHEBI:52973"/>
        <dbReference type="ChEBI" id="CHEBI:58223"/>
        <dbReference type="ChEBI" id="CHEBI:58885"/>
    </reaction>
    <physiologicalReaction direction="left-to-right" evidence="1">
        <dbReference type="Rhea" id="RHEA:61837"/>
    </physiologicalReaction>
</comment>
<comment type="subcellular location">
    <subcellularLocation>
        <location evidence="1">Cytoplasm</location>
    </subcellularLocation>
    <subcellularLocation>
        <location evidence="2">Preautophagosomal structure membrane</location>
        <topology evidence="2">Peripheral membrane protein</topology>
    </subcellularLocation>
</comment>
<comment type="domain">
    <text evidence="6">The GRAM and PH domains are infection-related pexophagy (PubMed:19363139).</text>
</comment>
<comment type="disruption phenotype">
    <text evidence="6">Leads to delayed autophagic degradation of peroxisomes in the appressoria (PubMed:19363139).</text>
</comment>
<comment type="similarity">
    <text evidence="8">Belongs to the glycosyltransferase 28 family.</text>
</comment>